<reference key="1">
    <citation type="journal article" date="1994" name="Genetics">
        <title>Molecular evolution of the metallothionein gene Mtn in the melanogaster species group: results from Drosophila ananassae.</title>
        <authorList>
            <person name="Stephan W."/>
            <person name="Rodriguez V.S."/>
            <person name="Zhou B."/>
            <person name="Parsch J."/>
        </authorList>
    </citation>
    <scope>NUCLEOTIDE SEQUENCE [GENOMIC DNA]</scope>
</reference>
<name>MT1_DROAN</name>
<keyword id="KW-0104">Cadmium</keyword>
<keyword id="KW-0186">Copper</keyword>
<keyword id="KW-0479">Metal-binding</keyword>
<keyword id="KW-0862">Zinc</keyword>
<gene>
    <name type="primary">MtnA</name>
</gene>
<evidence type="ECO:0000305" key="1"/>
<feature type="chain" id="PRO_0000197352" description="Metallothionein-1">
    <location>
        <begin position="1"/>
        <end position="40"/>
    </location>
</feature>
<sequence length="40" mass="3852">MPCPCGSGCKCASQATKGSCNCGSDCKCGGDKKSACGCSK</sequence>
<dbReference type="EMBL" id="S75822">
    <property type="protein sequence ID" value="AAB32801.2"/>
    <property type="molecule type" value="Genomic_DNA"/>
</dbReference>
<dbReference type="eggNOG" id="KOG4738">
    <property type="taxonomic scope" value="Eukaryota"/>
</dbReference>
<dbReference type="ChiTaRS" id="MtnA">
    <property type="organism name" value="fly"/>
</dbReference>
<dbReference type="GO" id="GO:0046872">
    <property type="term" value="F:metal ion binding"/>
    <property type="evidence" value="ECO:0007669"/>
    <property type="project" value="UniProtKB-KW"/>
</dbReference>
<dbReference type="InterPro" id="IPR000966">
    <property type="entry name" value="Metalthion_5"/>
</dbReference>
<dbReference type="Pfam" id="PF02067">
    <property type="entry name" value="Metallothio_5"/>
    <property type="match status" value="1"/>
</dbReference>
<dbReference type="PRINTS" id="PR00872">
    <property type="entry name" value="MTDIPTERA"/>
</dbReference>
<protein>
    <recommendedName>
        <fullName>Metallothionein-1</fullName>
        <shortName>MT-1</shortName>
    </recommendedName>
</protein>
<accession>P61873</accession>
<accession>P22254</accession>
<comment type="function">
    <text>This protein binds cations of several transition elements. It is thought to be involved in detoxification processes.</text>
</comment>
<comment type="developmental stage">
    <text>Late embryogenesis, larva and adult.</text>
</comment>
<comment type="induction">
    <text>Strongly induced by cadmium, copper and mercury.</text>
</comment>
<comment type="domain">
    <text>All cysteine residues are arranged in C-X-C groups. These are thought to be the metal-binding sites in other metallothioneins.</text>
</comment>
<comment type="similarity">
    <text evidence="1">Belongs to the metallothionein superfamily. Type 5 family.</text>
</comment>
<proteinExistence type="evidence at transcript level"/>
<organism>
    <name type="scientific">Drosophila ananassae</name>
    <name type="common">Fruit fly</name>
    <dbReference type="NCBI Taxonomy" id="7217"/>
    <lineage>
        <taxon>Eukaryota</taxon>
        <taxon>Metazoa</taxon>
        <taxon>Ecdysozoa</taxon>
        <taxon>Arthropoda</taxon>
        <taxon>Hexapoda</taxon>
        <taxon>Insecta</taxon>
        <taxon>Pterygota</taxon>
        <taxon>Neoptera</taxon>
        <taxon>Endopterygota</taxon>
        <taxon>Diptera</taxon>
        <taxon>Brachycera</taxon>
        <taxon>Muscomorpha</taxon>
        <taxon>Ephydroidea</taxon>
        <taxon>Drosophilidae</taxon>
        <taxon>Drosophila</taxon>
        <taxon>Sophophora</taxon>
    </lineage>
</organism>